<dbReference type="EC" id="2.4.1.91" evidence="3"/>
<dbReference type="EMBL" id="NKQK01000028">
    <property type="protein sequence ID" value="PSR86096.1"/>
    <property type="molecule type" value="Genomic_DNA"/>
</dbReference>
<dbReference type="SMR" id="A0A2R6P624"/>
<dbReference type="FunCoup" id="A0A2R6P624">
    <property type="interactions" value="157"/>
</dbReference>
<dbReference type="STRING" id="1590841.A0A2R6P624"/>
<dbReference type="EnsemblPlants" id="PSR86096">
    <property type="protein sequence ID" value="PSR86096"/>
    <property type="gene ID" value="CEY00_Acc31725"/>
</dbReference>
<dbReference type="Gramene" id="PSR86096">
    <property type="protein sequence ID" value="PSR86096"/>
    <property type="gene ID" value="CEY00_Acc31725"/>
</dbReference>
<dbReference type="InParanoid" id="A0A2R6P624"/>
<dbReference type="OMA" id="DRHAPRT"/>
<dbReference type="OrthoDB" id="5835829at2759"/>
<dbReference type="Proteomes" id="UP000241394">
    <property type="component" value="Chromosome LG28"/>
</dbReference>
<dbReference type="GO" id="GO:0102454">
    <property type="term" value="F:cyanidin 3-O-galactosyltransferase activity"/>
    <property type="evidence" value="ECO:0000314"/>
    <property type="project" value="UniProtKB"/>
</dbReference>
<dbReference type="GO" id="GO:0047893">
    <property type="term" value="F:flavonol 3-O-glucosyltransferase activity"/>
    <property type="evidence" value="ECO:0007669"/>
    <property type="project" value="UniProtKB-EC"/>
</dbReference>
<dbReference type="GO" id="GO:0009718">
    <property type="term" value="P:anthocyanin-containing compound biosynthetic process"/>
    <property type="evidence" value="ECO:0000314"/>
    <property type="project" value="UniProtKB"/>
</dbReference>
<dbReference type="CDD" id="cd03784">
    <property type="entry name" value="GT1_Gtf-like"/>
    <property type="match status" value="1"/>
</dbReference>
<dbReference type="FunFam" id="3.40.50.2000:FF:000091">
    <property type="entry name" value="Glycosyltransferase"/>
    <property type="match status" value="1"/>
</dbReference>
<dbReference type="FunFam" id="3.40.50.2000:FF:000129">
    <property type="entry name" value="Glycosyltransferase"/>
    <property type="match status" value="1"/>
</dbReference>
<dbReference type="Gene3D" id="3.40.50.2000">
    <property type="entry name" value="Glycogen Phosphorylase B"/>
    <property type="match status" value="2"/>
</dbReference>
<dbReference type="InterPro" id="IPR002213">
    <property type="entry name" value="UDP_glucos_trans"/>
</dbReference>
<dbReference type="InterPro" id="IPR035595">
    <property type="entry name" value="UDP_glycos_trans_CS"/>
</dbReference>
<dbReference type="PANTHER" id="PTHR48045:SF34">
    <property type="entry name" value="ISOFLAVONE 7-O-GLUCOSYLTRANSFERASE 1-LIKE"/>
    <property type="match status" value="1"/>
</dbReference>
<dbReference type="PANTHER" id="PTHR48045">
    <property type="entry name" value="UDP-GLYCOSYLTRANSFERASE 72B1"/>
    <property type="match status" value="1"/>
</dbReference>
<dbReference type="Pfam" id="PF00201">
    <property type="entry name" value="UDPGT"/>
    <property type="match status" value="1"/>
</dbReference>
<dbReference type="SUPFAM" id="SSF53756">
    <property type="entry name" value="UDP-Glycosyltransferase/glycogen phosphorylase"/>
    <property type="match status" value="1"/>
</dbReference>
<dbReference type="PROSITE" id="PS00375">
    <property type="entry name" value="UDPGT"/>
    <property type="match status" value="1"/>
</dbReference>
<keyword id="KW-0284">Flavonoid biosynthesis</keyword>
<keyword id="KW-0328">Glycosyltransferase</keyword>
<keyword id="KW-1185">Reference proteome</keyword>
<keyword id="KW-0808">Transferase</keyword>
<evidence type="ECO:0000250" key="1">
    <source>
        <dbReference type="UniProtKB" id="A0A0A1HA03"/>
    </source>
</evidence>
<evidence type="ECO:0000250" key="2">
    <source>
        <dbReference type="UniProtKB" id="P51094"/>
    </source>
</evidence>
<evidence type="ECO:0000269" key="3">
    <source>
    </source>
</evidence>
<evidence type="ECO:0000303" key="4">
    <source>
    </source>
</evidence>
<evidence type="ECO:0000305" key="5"/>
<evidence type="ECO:0000312" key="6">
    <source>
        <dbReference type="EMBL" id="PSR86096.1"/>
    </source>
</evidence>
<comment type="function">
    <text evidence="3">Catalyzes the glucosylation of quercetin (PubMed:21175894). Preferentially uses UDP-glucose as sugar donor, but is also able to use UDP-gal and UDP-xyl (PubMed:21175894). Is probably not required for the accumulation of anthocyanin in red-fleshed kiwifruit varieties (PubMed:21175894).</text>
</comment>
<comment type="catalytic activity">
    <reaction evidence="3">
        <text>a flavonol + UDP-alpha-D-glucose = a flavonol 3-O-beta-D-glucoside + UDP + H(+)</text>
        <dbReference type="Rhea" id="RHEA:22300"/>
        <dbReference type="ChEBI" id="CHEBI:15378"/>
        <dbReference type="ChEBI" id="CHEBI:16816"/>
        <dbReference type="ChEBI" id="CHEBI:28802"/>
        <dbReference type="ChEBI" id="CHEBI:58223"/>
        <dbReference type="ChEBI" id="CHEBI:58885"/>
        <dbReference type="EC" id="2.4.1.91"/>
    </reaction>
    <physiologicalReaction direction="left-to-right" evidence="3">
        <dbReference type="Rhea" id="RHEA:22301"/>
    </physiologicalReaction>
</comment>
<comment type="pathway">
    <text evidence="5">Flavonoid metabolism.</text>
</comment>
<comment type="tissue specificity">
    <text evidence="3">Expressed in ovaries.</text>
</comment>
<comment type="developmental stage">
    <text evidence="3">Expressed in the inner pericarp of developing fruit at 20 to 126 days after flowering (DAF).</text>
</comment>
<comment type="similarity">
    <text evidence="5">Belongs to the UDP-glycosyltransferase family.</text>
</comment>
<protein>
    <recommendedName>
        <fullName evidence="5">Flavonol 3-O-glucosyltransferase F3GT2</fullName>
        <ecNumber evidence="3">2.4.1.91</ecNumber>
    </recommendedName>
    <alternativeName>
        <fullName evidence="4">Flavonoid 3-O-glycosyltransferase 2</fullName>
    </alternativeName>
</protein>
<reference key="1">
    <citation type="journal article" date="2018" name="BMC Genomics">
        <title>A manually annotated Actinidia chinensis var. chinensis (kiwifruit) genome highlights the challenges associated with draft genomes and gene prediction in plants.</title>
        <authorList>
            <person name="Pilkington S.M."/>
            <person name="Crowhurst R."/>
            <person name="Hilario E."/>
            <person name="Nardozza S."/>
            <person name="Fraser L."/>
            <person name="Peng Y."/>
            <person name="Gunaseelan K."/>
            <person name="Simpson R."/>
            <person name="Tahir J."/>
            <person name="Deroles S.C."/>
            <person name="Templeton K."/>
            <person name="Luo Z."/>
            <person name="Davy M."/>
            <person name="Cheng C."/>
            <person name="McNeilage M."/>
            <person name="Scaglione D."/>
            <person name="Liu Y."/>
            <person name="Zhang Q."/>
            <person name="Datson P."/>
            <person name="De Silva N."/>
            <person name="Gardiner S.E."/>
            <person name="Bassett H."/>
            <person name="Chagne D."/>
            <person name="McCallum J."/>
            <person name="Dzierzon H."/>
            <person name="Deng C."/>
            <person name="Wang Y.Y."/>
            <person name="Barron L."/>
            <person name="Manako K."/>
            <person name="Bowen J."/>
            <person name="Foster T.M."/>
            <person name="Erridge Z.A."/>
            <person name="Tiffin H."/>
            <person name="Waite C.N."/>
            <person name="Davies K.M."/>
            <person name="Grierson E.P."/>
            <person name="Laing W.A."/>
            <person name="Kirk R."/>
            <person name="Chen X."/>
            <person name="Wood M."/>
            <person name="Montefiori M."/>
            <person name="Brummell D.A."/>
            <person name="Schwinn K.E."/>
            <person name="Catanach A."/>
            <person name="Fullerton C."/>
            <person name="Li D."/>
            <person name="Meiyalaghan S."/>
            <person name="Nieuwenhuizen N."/>
            <person name="Read N."/>
            <person name="Prakash R."/>
            <person name="Hunter D."/>
            <person name="Zhang H."/>
            <person name="McKenzie M."/>
            <person name="Knabel M."/>
            <person name="Harris A."/>
            <person name="Allan A.C."/>
            <person name="Gleave A."/>
            <person name="Chen A."/>
            <person name="Janssen B.J."/>
            <person name="Plunkett B."/>
            <person name="Ampomah-Dwamena C."/>
            <person name="Voogd C."/>
            <person name="Leif D."/>
            <person name="Lafferty D."/>
            <person name="Souleyre E.J.F."/>
            <person name="Varkonyi-Gasic E."/>
            <person name="Gambi F."/>
            <person name="Hanley J."/>
            <person name="Yao J.L."/>
            <person name="Cheung J."/>
            <person name="David K.M."/>
            <person name="Warren B."/>
            <person name="Marsh K."/>
            <person name="Snowden K.C."/>
            <person name="Lin-Wang K."/>
            <person name="Brian L."/>
            <person name="Martinez-Sanchez M."/>
            <person name="Wang M."/>
            <person name="Ileperuma N."/>
            <person name="Macnee N."/>
            <person name="Campin R."/>
            <person name="McAtee P."/>
            <person name="Drummond R.S.M."/>
            <person name="Espley R.V."/>
            <person name="Ireland H.S."/>
            <person name="Wu R."/>
            <person name="Atkinson R.G."/>
            <person name="Karunairetnam S."/>
            <person name="Bulley S."/>
            <person name="Chunkath S."/>
            <person name="Hanley Z."/>
            <person name="Storey R."/>
            <person name="Thrimawithana A.H."/>
            <person name="Thomson S."/>
            <person name="David C."/>
            <person name="Testolin R."/>
            <person name="Huang H."/>
            <person name="Hellens R.P."/>
            <person name="Schaffer R.J."/>
        </authorList>
    </citation>
    <scope>NUCLEOTIDE SEQUENCE [LARGE SCALE GENOMIC DNA]</scope>
    <source>
        <strain>cv. Red5</strain>
    </source>
</reference>
<reference key="2">
    <citation type="journal article" date="2011" name="Plant J.">
        <title>Identification and characterisation of F3GT1 and F3GGT1, two glycosyltransferases responsible for anthocyanin biosynthesis in red-fleshed kiwifruit (Actinidia chinensis).</title>
        <authorList>
            <person name="Montefiori M."/>
            <person name="Espley R.V."/>
            <person name="Stevenson D."/>
            <person name="Cooney J."/>
            <person name="Datson P.M."/>
            <person name="Saiz A."/>
            <person name="Atkinson R.G."/>
            <person name="Hellens R.P."/>
            <person name="Allan A.C."/>
        </authorList>
    </citation>
    <scope>FUNCTION</scope>
    <scope>CATALYTIC ACTIVITY</scope>
    <scope>TISSUE SPECIFICITY</scope>
    <scope>DEVELOPMENTAL STAGE</scope>
</reference>
<name>F3GT2_ACTCC</name>
<feature type="chain" id="PRO_5015345641" description="Flavonol 3-O-glucosyltransferase F3GT2">
    <location>
        <begin position="1"/>
        <end position="458"/>
    </location>
</feature>
<feature type="active site" description="Proton acceptor" evidence="1">
    <location>
        <position position="20"/>
    </location>
</feature>
<feature type="active site" description="Charge relay" evidence="1">
    <location>
        <position position="119"/>
    </location>
</feature>
<feature type="binding site" evidence="2">
    <location>
        <position position="20"/>
    </location>
    <ligand>
        <name>an anthocyanidin</name>
        <dbReference type="ChEBI" id="CHEBI:143576"/>
    </ligand>
</feature>
<feature type="binding site" evidence="1">
    <location>
        <position position="141"/>
    </location>
    <ligand>
        <name>UDP-alpha-D-glucose</name>
        <dbReference type="ChEBI" id="CHEBI:58885"/>
    </ligand>
</feature>
<feature type="binding site" evidence="2">
    <location>
        <position position="150"/>
    </location>
    <ligand>
        <name>an anthocyanidin</name>
        <dbReference type="ChEBI" id="CHEBI:143576"/>
    </ligand>
</feature>
<feature type="binding site" evidence="1">
    <location>
        <position position="333"/>
    </location>
    <ligand>
        <name>UDP-alpha-D-glucose</name>
        <dbReference type="ChEBI" id="CHEBI:58885"/>
    </ligand>
</feature>
<feature type="binding site" evidence="1">
    <location>
        <position position="335"/>
    </location>
    <ligand>
        <name>UDP-alpha-D-glucose</name>
        <dbReference type="ChEBI" id="CHEBI:58885"/>
    </ligand>
</feature>
<feature type="binding site" evidence="1">
    <location>
        <position position="350"/>
    </location>
    <ligand>
        <name>UDP-alpha-D-glucose</name>
        <dbReference type="ChEBI" id="CHEBI:58885"/>
    </ligand>
</feature>
<feature type="binding site" evidence="1">
    <location>
        <position position="353"/>
    </location>
    <ligand>
        <name>UDP-alpha-D-glucose</name>
        <dbReference type="ChEBI" id="CHEBI:58885"/>
    </ligand>
</feature>
<feature type="binding site" evidence="1">
    <location>
        <position position="354"/>
    </location>
    <ligand>
        <name>UDP-alpha-D-glucose</name>
        <dbReference type="ChEBI" id="CHEBI:58885"/>
    </ligand>
</feature>
<feature type="binding site" evidence="1">
    <location>
        <position position="355"/>
    </location>
    <ligand>
        <name>UDP-alpha-D-glucose</name>
        <dbReference type="ChEBI" id="CHEBI:58885"/>
    </ligand>
</feature>
<feature type="binding site" evidence="1">
    <location>
        <position position="358"/>
    </location>
    <ligand>
        <name>UDP-alpha-D-glucose</name>
        <dbReference type="ChEBI" id="CHEBI:58885"/>
    </ligand>
</feature>
<feature type="binding site" evidence="2">
    <location>
        <position position="373"/>
    </location>
    <ligand>
        <name>an anthocyanidin</name>
        <dbReference type="ChEBI" id="CHEBI:143576"/>
    </ligand>
</feature>
<feature type="binding site" evidence="1">
    <location>
        <position position="374"/>
    </location>
    <ligand>
        <name>UDP-alpha-D-glucose</name>
        <dbReference type="ChEBI" id="CHEBI:58885"/>
    </ligand>
</feature>
<feature type="binding site" evidence="1">
    <location>
        <position position="375"/>
    </location>
    <ligand>
        <name>UDP-alpha-D-glucose</name>
        <dbReference type="ChEBI" id="CHEBI:58885"/>
    </ligand>
</feature>
<accession>A0A2R6P624</accession>
<sequence>MSDHSKALHVAVLAFPFGSHAAPLLALVCRLATSNPTVRFSFLSTAQSNTHTFPSTRTNEFDNVRPYNVWDGVPEGHQISGNPHVGTGFFLKALPHNFKAGMAKAEEESGATINCLLTDAFFWFAGDLAEEMGVPWVPYWTAGACSLSAHVNTDVIRITLGSTRTTQNTNQTLNFIPGLSAVHMNDLPGGVLHGDLESPFAQMLHKMGLNLPRATAVVLNSFEELEPAITTDLKLRLQKVLHVGPPSLSSSPTSSLDESGCLLWLDKHEAASVAYISFGTIITPPPNELLALAEALRASKIPFLWSLRDHSRPIFPEGFLENVLAFGKVVSWAPQSQVLAHPSIGVFVTHCGWNSILESITGGVPMICRPFFGDQTLNSRMVQDAWRIGVRLDGGVFTKSSMMSAVELIFSREEGKKLRENIILLKQKATDAVGASGSSTENFNVLLEVIKTCKHPKS</sequence>
<proteinExistence type="evidence at protein level"/>
<gene>
    <name evidence="4" type="primary">F3GT2</name>
    <name evidence="6" type="ORF">CEY00_Acc31725</name>
</gene>
<organism>
    <name type="scientific">Actinidia chinensis var. chinensis</name>
    <name type="common">Chinese soft-hair kiwi</name>
    <dbReference type="NCBI Taxonomy" id="1590841"/>
    <lineage>
        <taxon>Eukaryota</taxon>
        <taxon>Viridiplantae</taxon>
        <taxon>Streptophyta</taxon>
        <taxon>Embryophyta</taxon>
        <taxon>Tracheophyta</taxon>
        <taxon>Spermatophyta</taxon>
        <taxon>Magnoliopsida</taxon>
        <taxon>eudicotyledons</taxon>
        <taxon>Gunneridae</taxon>
        <taxon>Pentapetalae</taxon>
        <taxon>asterids</taxon>
        <taxon>Ericales</taxon>
        <taxon>Actinidiaceae</taxon>
        <taxon>Actinidia</taxon>
    </lineage>
</organism>